<comment type="cofactor">
    <cofactor evidence="4">
        <name>Zn(2+)</name>
        <dbReference type="ChEBI" id="CHEBI:29105"/>
    </cofactor>
    <text evidence="4">Binds 1 zinc ion per subunit.</text>
</comment>
<comment type="interaction">
    <interactant intactId="EBI-355126">
        <id>Q71UM5</id>
    </interactant>
    <interactant intactId="EBI-389668">
        <id>Q00987</id>
        <label>MDM2</label>
    </interactant>
    <organismsDiffer>false</organismsDiffer>
    <experiments>6</experiments>
</comment>
<comment type="similarity">
    <text evidence="4">Belongs to the eukaryotic ribosomal protein eS27 family.</text>
</comment>
<gene>
    <name evidence="7" type="primary">RPS27L</name>
</gene>
<keyword id="KW-0479">Metal-binding</keyword>
<keyword id="KW-1267">Proteomics identification</keyword>
<keyword id="KW-1185">Reference proteome</keyword>
<keyword id="KW-0687">Ribonucleoprotein</keyword>
<keyword id="KW-0689">Ribosomal protein</keyword>
<keyword id="KW-0862">Zinc</keyword>
<keyword id="KW-0863">Zinc-finger</keyword>
<protein>
    <recommendedName>
        <fullName evidence="4">Ribosomal protein eS27-like</fullName>
    </recommendedName>
    <alternativeName>
        <fullName>40S ribosomal protein S27-like</fullName>
    </alternativeName>
    <alternativeName>
        <fullName>Small ribosomal subunit protein eS27-like</fullName>
    </alternativeName>
</protein>
<proteinExistence type="evidence at protein level"/>
<dbReference type="EMBL" id="AF070668">
    <property type="protein sequence ID" value="AAD20974.1"/>
    <property type="molecule type" value="mRNA"/>
</dbReference>
<dbReference type="EMBL" id="BC003667">
    <property type="protein sequence ID" value="AAH03667.1"/>
    <property type="molecule type" value="mRNA"/>
</dbReference>
<dbReference type="CCDS" id="CCDS42048.1"/>
<dbReference type="RefSeq" id="NP_057004.1">
    <property type="nucleotide sequence ID" value="NM_015920.4"/>
</dbReference>
<dbReference type="SMR" id="Q71UM5"/>
<dbReference type="BioGRID" id="119256">
    <property type="interactions" value="221"/>
</dbReference>
<dbReference type="ComplexPortal" id="CPX-5223">
    <property type="entry name" value="40S cytosolic small ribosomal subunit"/>
</dbReference>
<dbReference type="FunCoup" id="Q71UM5">
    <property type="interactions" value="1778"/>
</dbReference>
<dbReference type="IntAct" id="Q71UM5">
    <property type="interactions" value="95"/>
</dbReference>
<dbReference type="MINT" id="Q71UM5"/>
<dbReference type="STRING" id="9606.ENSP00000331019"/>
<dbReference type="GlyGen" id="Q71UM5">
    <property type="glycosylation" value="1 site, 1 O-linked glycan (1 site)"/>
</dbReference>
<dbReference type="iPTMnet" id="Q71UM5"/>
<dbReference type="PhosphoSitePlus" id="Q71UM5"/>
<dbReference type="SwissPalm" id="Q71UM5"/>
<dbReference type="BioMuta" id="RPS27L"/>
<dbReference type="DMDM" id="51316258"/>
<dbReference type="jPOST" id="Q71UM5"/>
<dbReference type="MassIVE" id="Q71UM5"/>
<dbReference type="PaxDb" id="9606-ENSP00000331019"/>
<dbReference type="PeptideAtlas" id="Q71UM5"/>
<dbReference type="ProteomicsDB" id="68634"/>
<dbReference type="Pumba" id="Q71UM5"/>
<dbReference type="TopDownProteomics" id="Q71UM5"/>
<dbReference type="Antibodypedia" id="42798">
    <property type="antibodies" value="88 antibodies from 25 providers"/>
</dbReference>
<dbReference type="DNASU" id="51065"/>
<dbReference type="Ensembl" id="ENST00000330964.10">
    <property type="protein sequence ID" value="ENSP00000331019.5"/>
    <property type="gene ID" value="ENSG00000185088.14"/>
</dbReference>
<dbReference type="GeneID" id="51065"/>
<dbReference type="KEGG" id="hsa:51065"/>
<dbReference type="MANE-Select" id="ENST00000330964.10">
    <property type="protein sequence ID" value="ENSP00000331019.5"/>
    <property type="RefSeq nucleotide sequence ID" value="NM_015920.4"/>
    <property type="RefSeq protein sequence ID" value="NP_057004.1"/>
</dbReference>
<dbReference type="UCSC" id="uc002aly.4">
    <property type="organism name" value="human"/>
</dbReference>
<dbReference type="AGR" id="HGNC:18476"/>
<dbReference type="CTD" id="51065"/>
<dbReference type="DisGeNET" id="51065"/>
<dbReference type="GeneCards" id="RPS27L"/>
<dbReference type="HGNC" id="HGNC:18476">
    <property type="gene designation" value="RPS27L"/>
</dbReference>
<dbReference type="HPA" id="ENSG00000185088">
    <property type="expression patterns" value="Low tissue specificity"/>
</dbReference>
<dbReference type="MIM" id="612055">
    <property type="type" value="gene"/>
</dbReference>
<dbReference type="neXtProt" id="NX_Q71UM5"/>
<dbReference type="OpenTargets" id="ENSG00000185088"/>
<dbReference type="PharmGKB" id="PA38546"/>
<dbReference type="VEuPathDB" id="HostDB:ENSG00000185088"/>
<dbReference type="eggNOG" id="KOG1779">
    <property type="taxonomic scope" value="Eukaryota"/>
</dbReference>
<dbReference type="GeneTree" id="ENSGT00950000182891"/>
<dbReference type="HOGENOM" id="CLU_130128_3_0_1"/>
<dbReference type="InParanoid" id="Q71UM5"/>
<dbReference type="OMA" id="ERINMPL"/>
<dbReference type="OrthoDB" id="5567124at2759"/>
<dbReference type="PAN-GO" id="Q71UM5">
    <property type="GO annotations" value="4 GO annotations based on evolutionary models"/>
</dbReference>
<dbReference type="PhylomeDB" id="Q71UM5"/>
<dbReference type="TreeFam" id="TF300265"/>
<dbReference type="PathwayCommons" id="Q71UM5"/>
<dbReference type="Reactome" id="R-HSA-156827">
    <property type="pathway name" value="L13a-mediated translational silencing of Ceruloplasmin expression"/>
</dbReference>
<dbReference type="Reactome" id="R-HSA-156902">
    <property type="pathway name" value="Peptide chain elongation"/>
</dbReference>
<dbReference type="Reactome" id="R-HSA-1799339">
    <property type="pathway name" value="SRP-dependent cotranslational protein targeting to membrane"/>
</dbReference>
<dbReference type="Reactome" id="R-HSA-192823">
    <property type="pathway name" value="Viral mRNA Translation"/>
</dbReference>
<dbReference type="Reactome" id="R-HSA-2408557">
    <property type="pathway name" value="Selenocysteine synthesis"/>
</dbReference>
<dbReference type="Reactome" id="R-HSA-6791226">
    <property type="pathway name" value="Major pathway of rRNA processing in the nucleolus and cytosol"/>
</dbReference>
<dbReference type="Reactome" id="R-HSA-72649">
    <property type="pathway name" value="Translation initiation complex formation"/>
</dbReference>
<dbReference type="Reactome" id="R-HSA-72689">
    <property type="pathway name" value="Formation of a pool of free 40S subunits"/>
</dbReference>
<dbReference type="Reactome" id="R-HSA-72695">
    <property type="pathway name" value="Formation of the ternary complex, and subsequently, the 43S complex"/>
</dbReference>
<dbReference type="Reactome" id="R-HSA-72702">
    <property type="pathway name" value="Ribosomal scanning and start codon recognition"/>
</dbReference>
<dbReference type="Reactome" id="R-HSA-72706">
    <property type="pathway name" value="GTP hydrolysis and joining of the 60S ribosomal subunit"/>
</dbReference>
<dbReference type="Reactome" id="R-HSA-72764">
    <property type="pathway name" value="Eukaryotic Translation Termination"/>
</dbReference>
<dbReference type="Reactome" id="R-HSA-9010553">
    <property type="pathway name" value="Regulation of expression of SLITs and ROBOs"/>
</dbReference>
<dbReference type="Reactome" id="R-HSA-9633012">
    <property type="pathway name" value="Response of EIF2AK4 (GCN2) to amino acid deficiency"/>
</dbReference>
<dbReference type="Reactome" id="R-HSA-9735869">
    <property type="pathway name" value="SARS-CoV-1 modulates host translation machinery"/>
</dbReference>
<dbReference type="Reactome" id="R-HSA-9754678">
    <property type="pathway name" value="SARS-CoV-2 modulates host translation machinery"/>
</dbReference>
<dbReference type="Reactome" id="R-HSA-975956">
    <property type="pathway name" value="Nonsense Mediated Decay (NMD) independent of the Exon Junction Complex (EJC)"/>
</dbReference>
<dbReference type="Reactome" id="R-HSA-975957">
    <property type="pathway name" value="Nonsense Mediated Decay (NMD) enhanced by the Exon Junction Complex (EJC)"/>
</dbReference>
<dbReference type="SignaLink" id="Q71UM5"/>
<dbReference type="SIGNOR" id="Q71UM5"/>
<dbReference type="BioGRID-ORCS" id="51065">
    <property type="hits" value="24 hits in 1126 CRISPR screens"/>
</dbReference>
<dbReference type="ChiTaRS" id="RPS27L">
    <property type="organism name" value="human"/>
</dbReference>
<dbReference type="GenomeRNAi" id="51065"/>
<dbReference type="Pharos" id="Q71UM5">
    <property type="development level" value="Tbio"/>
</dbReference>
<dbReference type="PRO" id="PR:Q71UM5"/>
<dbReference type="Proteomes" id="UP000005640">
    <property type="component" value="Chromosome 15"/>
</dbReference>
<dbReference type="RNAct" id="Q71UM5">
    <property type="molecule type" value="protein"/>
</dbReference>
<dbReference type="Bgee" id="ENSG00000185088">
    <property type="expression patterns" value="Expressed in seminal vesicle and 202 other cell types or tissues"/>
</dbReference>
<dbReference type="ExpressionAtlas" id="Q71UM5">
    <property type="expression patterns" value="baseline and differential"/>
</dbReference>
<dbReference type="GO" id="GO:0022627">
    <property type="term" value="C:cytosolic small ribosomal subunit"/>
    <property type="evidence" value="ECO:0000318"/>
    <property type="project" value="GO_Central"/>
</dbReference>
<dbReference type="GO" id="GO:0005634">
    <property type="term" value="C:nucleus"/>
    <property type="evidence" value="ECO:0000314"/>
    <property type="project" value="UniProtKB"/>
</dbReference>
<dbReference type="GO" id="GO:0003723">
    <property type="term" value="F:RNA binding"/>
    <property type="evidence" value="ECO:0007005"/>
    <property type="project" value="UniProtKB"/>
</dbReference>
<dbReference type="GO" id="GO:0003735">
    <property type="term" value="F:structural constituent of ribosome"/>
    <property type="evidence" value="ECO:0000318"/>
    <property type="project" value="GO_Central"/>
</dbReference>
<dbReference type="GO" id="GO:0008494">
    <property type="term" value="F:translation activator activity"/>
    <property type="evidence" value="ECO:0000314"/>
    <property type="project" value="UniProtKB"/>
</dbReference>
<dbReference type="GO" id="GO:0008270">
    <property type="term" value="F:zinc ion binding"/>
    <property type="evidence" value="ECO:0007669"/>
    <property type="project" value="UniProtKB-KW"/>
</dbReference>
<dbReference type="GO" id="GO:0030330">
    <property type="term" value="P:DNA damage response, signal transduction by p53 class mediator"/>
    <property type="evidence" value="ECO:0000314"/>
    <property type="project" value="UniProtKB"/>
</dbReference>
<dbReference type="GO" id="GO:0042771">
    <property type="term" value="P:intrinsic apoptotic signaling pathway in response to DNA damage by p53 class mediator"/>
    <property type="evidence" value="ECO:0000314"/>
    <property type="project" value="UniProtKB"/>
</dbReference>
<dbReference type="GO" id="GO:0031571">
    <property type="term" value="P:mitotic G1 DNA damage checkpoint signaling"/>
    <property type="evidence" value="ECO:0000315"/>
    <property type="project" value="UniProtKB"/>
</dbReference>
<dbReference type="GO" id="GO:0045727">
    <property type="term" value="P:positive regulation of translation"/>
    <property type="evidence" value="ECO:0000314"/>
    <property type="project" value="UniProtKB"/>
</dbReference>
<dbReference type="GO" id="GO:0000028">
    <property type="term" value="P:ribosomal small subunit assembly"/>
    <property type="evidence" value="ECO:0000318"/>
    <property type="project" value="GO_Central"/>
</dbReference>
<dbReference type="GO" id="GO:0006412">
    <property type="term" value="P:translation"/>
    <property type="evidence" value="ECO:0007669"/>
    <property type="project" value="InterPro"/>
</dbReference>
<dbReference type="FunFam" id="2.20.25.100:FF:000001">
    <property type="entry name" value="40S ribosomal protein S27"/>
    <property type="match status" value="1"/>
</dbReference>
<dbReference type="Gene3D" id="2.20.25.100">
    <property type="entry name" value="Zn-binding ribosomal proteins"/>
    <property type="match status" value="1"/>
</dbReference>
<dbReference type="HAMAP" id="MF_00371">
    <property type="entry name" value="Ribosomal_eS27"/>
    <property type="match status" value="1"/>
</dbReference>
<dbReference type="InterPro" id="IPR000592">
    <property type="entry name" value="Ribosomal_eS27"/>
</dbReference>
<dbReference type="InterPro" id="IPR023407">
    <property type="entry name" value="Ribosomal_eS27_Zn-bd_dom_sf"/>
</dbReference>
<dbReference type="InterPro" id="IPR011332">
    <property type="entry name" value="Ribosomal_zn-bd"/>
</dbReference>
<dbReference type="PANTHER" id="PTHR11594">
    <property type="entry name" value="40S RIBOSOMAL PROTEIN S27"/>
    <property type="match status" value="1"/>
</dbReference>
<dbReference type="Pfam" id="PF01667">
    <property type="entry name" value="Ribosomal_S27e"/>
    <property type="match status" value="1"/>
</dbReference>
<dbReference type="SUPFAM" id="SSF57829">
    <property type="entry name" value="Zn-binding ribosomal proteins"/>
    <property type="match status" value="1"/>
</dbReference>
<dbReference type="PROSITE" id="PS01168">
    <property type="entry name" value="RIBOSOMAL_S27E"/>
    <property type="match status" value="1"/>
</dbReference>
<evidence type="ECO:0000255" key="1"/>
<evidence type="ECO:0000256" key="2">
    <source>
        <dbReference type="SAM" id="MobiDB-lite"/>
    </source>
</evidence>
<evidence type="ECO:0000269" key="3">
    <source>
    </source>
</evidence>
<evidence type="ECO:0000305" key="4"/>
<evidence type="ECO:0000312" key="5">
    <source>
        <dbReference type="EMBL" id="AAD20974.1"/>
    </source>
</evidence>
<evidence type="ECO:0000312" key="6">
    <source>
        <dbReference type="EMBL" id="AAH03667.1"/>
    </source>
</evidence>
<evidence type="ECO:0000312" key="7">
    <source>
        <dbReference type="HGNC" id="HGNC:18476"/>
    </source>
</evidence>
<feature type="chain" id="PRO_0000149054" description="Ribosomal protein eS27-like">
    <location>
        <begin position="1"/>
        <end position="84"/>
    </location>
</feature>
<feature type="zinc finger region" description="C4-type" evidence="1">
    <location>
        <begin position="38"/>
        <end position="60"/>
    </location>
</feature>
<feature type="region of interest" description="Disordered" evidence="2">
    <location>
        <begin position="1"/>
        <end position="23"/>
    </location>
</feature>
<feature type="compositionally biased region" description="Basic and acidic residues" evidence="2">
    <location>
        <begin position="1"/>
        <end position="16"/>
    </location>
</feature>
<feature type="sequence conflict" description="In Ref. 2." evidence="4" ref="2">
    <original>K</original>
    <variation>E</variation>
    <location>
        <position position="22"/>
    </location>
</feature>
<name>RS27L_HUMAN</name>
<organism>
    <name type="scientific">Homo sapiens</name>
    <name type="common">Human</name>
    <dbReference type="NCBI Taxonomy" id="9606"/>
    <lineage>
        <taxon>Eukaryota</taxon>
        <taxon>Metazoa</taxon>
        <taxon>Chordata</taxon>
        <taxon>Craniata</taxon>
        <taxon>Vertebrata</taxon>
        <taxon>Euteleostomi</taxon>
        <taxon>Mammalia</taxon>
        <taxon>Eutheria</taxon>
        <taxon>Euarchontoglires</taxon>
        <taxon>Primates</taxon>
        <taxon>Haplorrhini</taxon>
        <taxon>Catarrhini</taxon>
        <taxon>Hominidae</taxon>
        <taxon>Homo</taxon>
    </lineage>
</organism>
<reference evidence="5" key="1">
    <citation type="journal article" date="2000" name="Genome Res.">
        <title>Cloning and functional analysis of cDNAs with open reading frames for 300 previously undefined genes expressed in CD34+ hematopoietic stem/progenitor cells.</title>
        <authorList>
            <person name="Zhang Q.-H."/>
            <person name="Ye M."/>
            <person name="Wu X.-Y."/>
            <person name="Ren S.-X."/>
            <person name="Zhao M."/>
            <person name="Zhao C.-J."/>
            <person name="Fu G."/>
            <person name="Shen Y."/>
            <person name="Fan H.-Y."/>
            <person name="Lu G."/>
            <person name="Zhong M."/>
            <person name="Xu X.-R."/>
            <person name="Han Z.-G."/>
            <person name="Zhang J.-W."/>
            <person name="Tao J."/>
            <person name="Huang Q.-H."/>
            <person name="Zhou J."/>
            <person name="Hu G.-X."/>
            <person name="Gu J."/>
            <person name="Chen S.-J."/>
            <person name="Chen Z."/>
        </authorList>
    </citation>
    <scope>NUCLEOTIDE SEQUENCE [LARGE SCALE MRNA]</scope>
    <source>
        <tissue evidence="3">Umbilical cord blood</tissue>
    </source>
</reference>
<reference evidence="6" key="2">
    <citation type="journal article" date="2004" name="Genome Res.">
        <title>The status, quality, and expansion of the NIH full-length cDNA project: the Mammalian Gene Collection (MGC).</title>
        <authorList>
            <consortium name="The MGC Project Team"/>
        </authorList>
    </citation>
    <scope>NUCLEOTIDE SEQUENCE [LARGE SCALE MRNA]</scope>
    <source>
        <tissue evidence="6">Kidney</tissue>
    </source>
</reference>
<reference key="3">
    <citation type="journal article" date="2011" name="BMC Syst. Biol.">
        <title>Initial characterization of the human central proteome.</title>
        <authorList>
            <person name="Burkard T.R."/>
            <person name="Planyavsky M."/>
            <person name="Kaupe I."/>
            <person name="Breitwieser F.P."/>
            <person name="Buerckstuemmer T."/>
            <person name="Bennett K.L."/>
            <person name="Superti-Furga G."/>
            <person name="Colinge J."/>
        </authorList>
    </citation>
    <scope>IDENTIFICATION BY MASS SPECTROMETRY [LARGE SCALE ANALYSIS]</scope>
</reference>
<reference key="4">
    <citation type="journal article" date="2014" name="J. Proteomics">
        <title>An enzyme assisted RP-RPLC approach for in-depth analysis of human liver phosphoproteome.</title>
        <authorList>
            <person name="Bian Y."/>
            <person name="Song C."/>
            <person name="Cheng K."/>
            <person name="Dong M."/>
            <person name="Wang F."/>
            <person name="Huang J."/>
            <person name="Sun D."/>
            <person name="Wang L."/>
            <person name="Ye M."/>
            <person name="Zou H."/>
        </authorList>
    </citation>
    <scope>IDENTIFICATION BY MASS SPECTROMETRY [LARGE SCALE ANALYSIS]</scope>
    <source>
        <tissue>Liver</tissue>
    </source>
</reference>
<accession>Q71UM5</accession>
<accession>Q9BTJ1</accession>
<sequence length="84" mass="9477">MPLARDLLHPSLEEEKKKHKKKRLVQSPNSYFMDVKCPGCYKITTVFSHAQTVVLCVGCSTVLCQPTGGKARLTEGCSFRRKQH</sequence>